<feature type="chain" id="PRO_1000074521" description="UDP-N-acetylenolpyruvoylglucosamine reductase">
    <location>
        <begin position="1"/>
        <end position="316"/>
    </location>
</feature>
<feature type="domain" description="FAD-binding PCMH-type" evidence="1">
    <location>
        <begin position="27"/>
        <end position="225"/>
    </location>
</feature>
<feature type="active site" evidence="1">
    <location>
        <position position="190"/>
    </location>
</feature>
<feature type="active site" description="Proton donor" evidence="1">
    <location>
        <position position="239"/>
    </location>
</feature>
<feature type="active site" evidence="1">
    <location>
        <position position="309"/>
    </location>
</feature>
<proteinExistence type="inferred from homology"/>
<reference key="1">
    <citation type="journal article" date="2009" name="Infect. Immun.">
        <title>Comparative genomics reveal extensive transposon-mediated genomic plasticity and diversity among potential effector proteins within the genus Coxiella.</title>
        <authorList>
            <person name="Beare P.A."/>
            <person name="Unsworth N."/>
            <person name="Andoh M."/>
            <person name="Voth D.E."/>
            <person name="Omsland A."/>
            <person name="Gilk S.D."/>
            <person name="Williams K.P."/>
            <person name="Sobral B.W."/>
            <person name="Kupko J.J. III"/>
            <person name="Porcella S.F."/>
            <person name="Samuel J.E."/>
            <person name="Heinzen R.A."/>
        </authorList>
    </citation>
    <scope>NUCLEOTIDE SEQUENCE [LARGE SCALE GENOMIC DNA]</scope>
    <source>
        <strain>Dugway 5J108-111</strain>
    </source>
</reference>
<sequence length="316" mass="34633">MDKENFTRLRGELFCDHPLARYTSWRVGGKAERFYRPADLFDLQDFLTQLPSDEPLTWLGLGSNVLIRDGGIKGTVILTLNRLKELSVVNSQLVFREKSGTEDFFSGNGKTIIRAEAGVTCAKLAKFCVSQGLEDGAFFAGIPGTVGGALAMNAGAFGGETWRTVIGVETMNHQGEILKRTPDEFKIHYRQVEGLENQFFIAGYFCFNHGDPDKAKTAINALLKKRNLSQPIGKYSCGSVFRNPPGDYAARLIESAGLKGKSIGNAEVSEKHANFILNKGNASAADIEALIHYVAQHVSQNHGIQLVKEVHIIGRS</sequence>
<name>MURB_COXBN</name>
<protein>
    <recommendedName>
        <fullName evidence="1">UDP-N-acetylenolpyruvoylglucosamine reductase</fullName>
        <ecNumber evidence="1">1.3.1.98</ecNumber>
    </recommendedName>
    <alternativeName>
        <fullName evidence="1">UDP-N-acetylmuramate dehydrogenase</fullName>
    </alternativeName>
</protein>
<keyword id="KW-0131">Cell cycle</keyword>
<keyword id="KW-0132">Cell division</keyword>
<keyword id="KW-0133">Cell shape</keyword>
<keyword id="KW-0961">Cell wall biogenesis/degradation</keyword>
<keyword id="KW-0963">Cytoplasm</keyword>
<keyword id="KW-0274">FAD</keyword>
<keyword id="KW-0285">Flavoprotein</keyword>
<keyword id="KW-0521">NADP</keyword>
<keyword id="KW-0560">Oxidoreductase</keyword>
<keyword id="KW-0573">Peptidoglycan synthesis</keyword>
<organism>
    <name type="scientific">Coxiella burnetii (strain Dugway 5J108-111)</name>
    <dbReference type="NCBI Taxonomy" id="434922"/>
    <lineage>
        <taxon>Bacteria</taxon>
        <taxon>Pseudomonadati</taxon>
        <taxon>Pseudomonadota</taxon>
        <taxon>Gammaproteobacteria</taxon>
        <taxon>Legionellales</taxon>
        <taxon>Coxiellaceae</taxon>
        <taxon>Coxiella</taxon>
    </lineage>
</organism>
<comment type="function">
    <text evidence="1">Cell wall formation.</text>
</comment>
<comment type="catalytic activity">
    <reaction evidence="1">
        <text>UDP-N-acetyl-alpha-D-muramate + NADP(+) = UDP-N-acetyl-3-O-(1-carboxyvinyl)-alpha-D-glucosamine + NADPH + H(+)</text>
        <dbReference type="Rhea" id="RHEA:12248"/>
        <dbReference type="ChEBI" id="CHEBI:15378"/>
        <dbReference type="ChEBI" id="CHEBI:57783"/>
        <dbReference type="ChEBI" id="CHEBI:58349"/>
        <dbReference type="ChEBI" id="CHEBI:68483"/>
        <dbReference type="ChEBI" id="CHEBI:70757"/>
        <dbReference type="EC" id="1.3.1.98"/>
    </reaction>
</comment>
<comment type="cofactor">
    <cofactor evidence="1">
        <name>FAD</name>
        <dbReference type="ChEBI" id="CHEBI:57692"/>
    </cofactor>
</comment>
<comment type="pathway">
    <text evidence="1">Cell wall biogenesis; peptidoglycan biosynthesis.</text>
</comment>
<comment type="subcellular location">
    <subcellularLocation>
        <location evidence="1">Cytoplasm</location>
    </subcellularLocation>
</comment>
<comment type="similarity">
    <text evidence="1">Belongs to the MurB family.</text>
</comment>
<gene>
    <name evidence="1" type="primary">murB</name>
    <name type="ordered locus">CBUD_1970</name>
</gene>
<dbReference type="EC" id="1.3.1.98" evidence="1"/>
<dbReference type="EMBL" id="CP000733">
    <property type="protein sequence ID" value="ABS78102.1"/>
    <property type="molecule type" value="Genomic_DNA"/>
</dbReference>
<dbReference type="RefSeq" id="WP_011997354.1">
    <property type="nucleotide sequence ID" value="NC_009727.1"/>
</dbReference>
<dbReference type="SMR" id="A9KER1"/>
<dbReference type="KEGG" id="cbd:CBUD_1970"/>
<dbReference type="HOGENOM" id="CLU_035304_1_0_6"/>
<dbReference type="UniPathway" id="UPA00219"/>
<dbReference type="Proteomes" id="UP000008555">
    <property type="component" value="Chromosome"/>
</dbReference>
<dbReference type="GO" id="GO:0005829">
    <property type="term" value="C:cytosol"/>
    <property type="evidence" value="ECO:0007669"/>
    <property type="project" value="TreeGrafter"/>
</dbReference>
<dbReference type="GO" id="GO:0071949">
    <property type="term" value="F:FAD binding"/>
    <property type="evidence" value="ECO:0007669"/>
    <property type="project" value="InterPro"/>
</dbReference>
<dbReference type="GO" id="GO:0008762">
    <property type="term" value="F:UDP-N-acetylmuramate dehydrogenase activity"/>
    <property type="evidence" value="ECO:0007669"/>
    <property type="project" value="UniProtKB-UniRule"/>
</dbReference>
<dbReference type="GO" id="GO:0051301">
    <property type="term" value="P:cell division"/>
    <property type="evidence" value="ECO:0007669"/>
    <property type="project" value="UniProtKB-KW"/>
</dbReference>
<dbReference type="GO" id="GO:0071555">
    <property type="term" value="P:cell wall organization"/>
    <property type="evidence" value="ECO:0007669"/>
    <property type="project" value="UniProtKB-KW"/>
</dbReference>
<dbReference type="GO" id="GO:0009252">
    <property type="term" value="P:peptidoglycan biosynthetic process"/>
    <property type="evidence" value="ECO:0007669"/>
    <property type="project" value="UniProtKB-UniRule"/>
</dbReference>
<dbReference type="GO" id="GO:0008360">
    <property type="term" value="P:regulation of cell shape"/>
    <property type="evidence" value="ECO:0007669"/>
    <property type="project" value="UniProtKB-KW"/>
</dbReference>
<dbReference type="Gene3D" id="3.30.465.10">
    <property type="match status" value="1"/>
</dbReference>
<dbReference type="Gene3D" id="3.90.78.10">
    <property type="entry name" value="UDP-N-acetylenolpyruvoylglucosamine reductase, C-terminal domain"/>
    <property type="match status" value="1"/>
</dbReference>
<dbReference type="Gene3D" id="3.30.43.10">
    <property type="entry name" value="Uridine Diphospho-n-acetylenolpyruvylglucosamine Reductase, domain 2"/>
    <property type="match status" value="1"/>
</dbReference>
<dbReference type="HAMAP" id="MF_00037">
    <property type="entry name" value="MurB"/>
    <property type="match status" value="1"/>
</dbReference>
<dbReference type="InterPro" id="IPR016166">
    <property type="entry name" value="FAD-bd_PCMH"/>
</dbReference>
<dbReference type="InterPro" id="IPR036318">
    <property type="entry name" value="FAD-bd_PCMH-like_sf"/>
</dbReference>
<dbReference type="InterPro" id="IPR016167">
    <property type="entry name" value="FAD-bd_PCMH_sub1"/>
</dbReference>
<dbReference type="InterPro" id="IPR016169">
    <property type="entry name" value="FAD-bd_PCMH_sub2"/>
</dbReference>
<dbReference type="InterPro" id="IPR003170">
    <property type="entry name" value="MurB"/>
</dbReference>
<dbReference type="InterPro" id="IPR011601">
    <property type="entry name" value="MurB_C"/>
</dbReference>
<dbReference type="InterPro" id="IPR036635">
    <property type="entry name" value="MurB_C_sf"/>
</dbReference>
<dbReference type="InterPro" id="IPR006094">
    <property type="entry name" value="Oxid_FAD_bind_N"/>
</dbReference>
<dbReference type="NCBIfam" id="TIGR00179">
    <property type="entry name" value="murB"/>
    <property type="match status" value="1"/>
</dbReference>
<dbReference type="NCBIfam" id="NF010480">
    <property type="entry name" value="PRK13905.1"/>
    <property type="match status" value="1"/>
</dbReference>
<dbReference type="PANTHER" id="PTHR21071">
    <property type="entry name" value="UDP-N-ACETYLENOLPYRUVOYLGLUCOSAMINE REDUCTASE"/>
    <property type="match status" value="1"/>
</dbReference>
<dbReference type="PANTHER" id="PTHR21071:SF4">
    <property type="entry name" value="UDP-N-ACETYLENOLPYRUVOYLGLUCOSAMINE REDUCTASE"/>
    <property type="match status" value="1"/>
</dbReference>
<dbReference type="Pfam" id="PF01565">
    <property type="entry name" value="FAD_binding_4"/>
    <property type="match status" value="1"/>
</dbReference>
<dbReference type="Pfam" id="PF02873">
    <property type="entry name" value="MurB_C"/>
    <property type="match status" value="1"/>
</dbReference>
<dbReference type="SUPFAM" id="SSF56176">
    <property type="entry name" value="FAD-binding/transporter-associated domain-like"/>
    <property type="match status" value="1"/>
</dbReference>
<dbReference type="SUPFAM" id="SSF56194">
    <property type="entry name" value="Uridine diphospho-N-Acetylenolpyruvylglucosamine reductase, MurB, C-terminal domain"/>
    <property type="match status" value="1"/>
</dbReference>
<dbReference type="PROSITE" id="PS51387">
    <property type="entry name" value="FAD_PCMH"/>
    <property type="match status" value="1"/>
</dbReference>
<evidence type="ECO:0000255" key="1">
    <source>
        <dbReference type="HAMAP-Rule" id="MF_00037"/>
    </source>
</evidence>
<accession>A9KER1</accession>